<protein>
    <recommendedName>
        <fullName evidence="1">tRNA(Ile)-lysidine synthase</fullName>
        <ecNumber evidence="1">6.3.4.19</ecNumber>
    </recommendedName>
    <alternativeName>
        <fullName evidence="1">tRNA(Ile)-2-lysyl-cytidine synthase</fullName>
    </alternativeName>
    <alternativeName>
        <fullName evidence="1">tRNA(Ile)-lysidine synthetase</fullName>
    </alternativeName>
</protein>
<dbReference type="EC" id="6.3.4.19" evidence="1"/>
<dbReference type="EMBL" id="CP001022">
    <property type="protein sequence ID" value="ACB59537.1"/>
    <property type="molecule type" value="Genomic_DNA"/>
</dbReference>
<dbReference type="RefSeq" id="WP_012368963.1">
    <property type="nucleotide sequence ID" value="NC_010556.1"/>
</dbReference>
<dbReference type="SMR" id="B1YGQ4"/>
<dbReference type="STRING" id="262543.Exig_0050"/>
<dbReference type="KEGG" id="esi:Exig_0050"/>
<dbReference type="eggNOG" id="COG0037">
    <property type="taxonomic scope" value="Bacteria"/>
</dbReference>
<dbReference type="HOGENOM" id="CLU_018869_2_0_9"/>
<dbReference type="OrthoDB" id="9807403at2"/>
<dbReference type="Proteomes" id="UP000001681">
    <property type="component" value="Chromosome"/>
</dbReference>
<dbReference type="GO" id="GO:0005737">
    <property type="term" value="C:cytoplasm"/>
    <property type="evidence" value="ECO:0007669"/>
    <property type="project" value="UniProtKB-SubCell"/>
</dbReference>
<dbReference type="GO" id="GO:0005524">
    <property type="term" value="F:ATP binding"/>
    <property type="evidence" value="ECO:0007669"/>
    <property type="project" value="UniProtKB-UniRule"/>
</dbReference>
<dbReference type="GO" id="GO:0032267">
    <property type="term" value="F:tRNA(Ile)-lysidine synthase activity"/>
    <property type="evidence" value="ECO:0007669"/>
    <property type="project" value="UniProtKB-EC"/>
</dbReference>
<dbReference type="GO" id="GO:0006400">
    <property type="term" value="P:tRNA modification"/>
    <property type="evidence" value="ECO:0007669"/>
    <property type="project" value="UniProtKB-UniRule"/>
</dbReference>
<dbReference type="CDD" id="cd01992">
    <property type="entry name" value="TilS_N"/>
    <property type="match status" value="1"/>
</dbReference>
<dbReference type="Gene3D" id="3.40.50.620">
    <property type="entry name" value="HUPs"/>
    <property type="match status" value="1"/>
</dbReference>
<dbReference type="HAMAP" id="MF_01161">
    <property type="entry name" value="tRNA_Ile_lys_synt"/>
    <property type="match status" value="1"/>
</dbReference>
<dbReference type="InterPro" id="IPR012796">
    <property type="entry name" value="Lysidine-tRNA-synth_C"/>
</dbReference>
<dbReference type="InterPro" id="IPR014729">
    <property type="entry name" value="Rossmann-like_a/b/a_fold"/>
</dbReference>
<dbReference type="InterPro" id="IPR011063">
    <property type="entry name" value="TilS/TtcA_N"/>
</dbReference>
<dbReference type="InterPro" id="IPR012094">
    <property type="entry name" value="tRNA_Ile_lys_synt"/>
</dbReference>
<dbReference type="InterPro" id="IPR012795">
    <property type="entry name" value="tRNA_Ile_lys_synt_N"/>
</dbReference>
<dbReference type="NCBIfam" id="TIGR02433">
    <property type="entry name" value="lysidine_TilS_C"/>
    <property type="match status" value="1"/>
</dbReference>
<dbReference type="NCBIfam" id="TIGR02432">
    <property type="entry name" value="lysidine_TilS_N"/>
    <property type="match status" value="1"/>
</dbReference>
<dbReference type="PANTHER" id="PTHR43033">
    <property type="entry name" value="TRNA(ILE)-LYSIDINE SYNTHASE-RELATED"/>
    <property type="match status" value="1"/>
</dbReference>
<dbReference type="PANTHER" id="PTHR43033:SF1">
    <property type="entry name" value="TRNA(ILE)-LYSIDINE SYNTHASE-RELATED"/>
    <property type="match status" value="1"/>
</dbReference>
<dbReference type="Pfam" id="PF01171">
    <property type="entry name" value="ATP_bind_3"/>
    <property type="match status" value="1"/>
</dbReference>
<dbReference type="Pfam" id="PF11734">
    <property type="entry name" value="TilS_C"/>
    <property type="match status" value="1"/>
</dbReference>
<dbReference type="SMART" id="SM00977">
    <property type="entry name" value="TilS_C"/>
    <property type="match status" value="1"/>
</dbReference>
<dbReference type="SUPFAM" id="SSF52402">
    <property type="entry name" value="Adenine nucleotide alpha hydrolases-like"/>
    <property type="match status" value="1"/>
</dbReference>
<dbReference type="SUPFAM" id="SSF56037">
    <property type="entry name" value="PheT/TilS domain"/>
    <property type="match status" value="1"/>
</dbReference>
<reference key="1">
    <citation type="submission" date="2008-04" db="EMBL/GenBank/DDBJ databases">
        <title>Complete sequence of chromosome of Exiguobacterium sibiricum 255-15.</title>
        <authorList>
            <consortium name="US DOE Joint Genome Institute"/>
            <person name="Copeland A."/>
            <person name="Lucas S."/>
            <person name="Lapidus A."/>
            <person name="Glavina del Rio T."/>
            <person name="Dalin E."/>
            <person name="Tice H."/>
            <person name="Bruce D."/>
            <person name="Goodwin L."/>
            <person name="Pitluck S."/>
            <person name="Kiss H."/>
            <person name="Chertkov O."/>
            <person name="Monk C."/>
            <person name="Brettin T."/>
            <person name="Detter J.C."/>
            <person name="Han C."/>
            <person name="Kuske C.R."/>
            <person name="Schmutz J."/>
            <person name="Larimer F."/>
            <person name="Land M."/>
            <person name="Hauser L."/>
            <person name="Kyrpides N."/>
            <person name="Mikhailova N."/>
            <person name="Vishnivetskaya T."/>
            <person name="Rodrigues D.F."/>
            <person name="Gilichinsky D."/>
            <person name="Tiedje J."/>
            <person name="Richardson P."/>
        </authorList>
    </citation>
    <scope>NUCLEOTIDE SEQUENCE [LARGE SCALE GENOMIC DNA]</scope>
    <source>
        <strain>DSM 17290 / CCUG 55495 / CIP 109462 / JCM 13490 / 255-15</strain>
    </source>
</reference>
<comment type="function">
    <text evidence="1">Ligates lysine onto the cytidine present at position 34 of the AUA codon-specific tRNA(Ile) that contains the anticodon CAU, in an ATP-dependent manner. Cytidine is converted to lysidine, thus changing the amino acid specificity of the tRNA from methionine to isoleucine.</text>
</comment>
<comment type="catalytic activity">
    <reaction evidence="1">
        <text>cytidine(34) in tRNA(Ile2) + L-lysine + ATP = lysidine(34) in tRNA(Ile2) + AMP + diphosphate + H(+)</text>
        <dbReference type="Rhea" id="RHEA:43744"/>
        <dbReference type="Rhea" id="RHEA-COMP:10625"/>
        <dbReference type="Rhea" id="RHEA-COMP:10670"/>
        <dbReference type="ChEBI" id="CHEBI:15378"/>
        <dbReference type="ChEBI" id="CHEBI:30616"/>
        <dbReference type="ChEBI" id="CHEBI:32551"/>
        <dbReference type="ChEBI" id="CHEBI:33019"/>
        <dbReference type="ChEBI" id="CHEBI:82748"/>
        <dbReference type="ChEBI" id="CHEBI:83665"/>
        <dbReference type="ChEBI" id="CHEBI:456215"/>
        <dbReference type="EC" id="6.3.4.19"/>
    </reaction>
</comment>
<comment type="subcellular location">
    <subcellularLocation>
        <location evidence="1">Cytoplasm</location>
    </subcellularLocation>
</comment>
<comment type="domain">
    <text>The N-terminal region contains the highly conserved SGGXDS motif, predicted to be a P-loop motif involved in ATP binding.</text>
</comment>
<comment type="similarity">
    <text evidence="1">Belongs to the tRNA(Ile)-lysidine synthase family.</text>
</comment>
<accession>B1YGQ4</accession>
<organism>
    <name type="scientific">Exiguobacterium sibiricum (strain DSM 17290 / CCUG 55495 / CIP 109462 / JCM 13490 / 255-15)</name>
    <dbReference type="NCBI Taxonomy" id="262543"/>
    <lineage>
        <taxon>Bacteria</taxon>
        <taxon>Bacillati</taxon>
        <taxon>Bacillota</taxon>
        <taxon>Bacilli</taxon>
        <taxon>Bacillales</taxon>
        <taxon>Bacillales Family XII. Incertae Sedis</taxon>
        <taxon>Exiguobacterium</taxon>
    </lineage>
</organism>
<keyword id="KW-0067">ATP-binding</keyword>
<keyword id="KW-0963">Cytoplasm</keyword>
<keyword id="KW-0436">Ligase</keyword>
<keyword id="KW-0547">Nucleotide-binding</keyword>
<keyword id="KW-1185">Reference proteome</keyword>
<keyword id="KW-0819">tRNA processing</keyword>
<evidence type="ECO:0000255" key="1">
    <source>
        <dbReference type="HAMAP-Rule" id="MF_01161"/>
    </source>
</evidence>
<proteinExistence type="inferred from homology"/>
<name>TILS_EXIS2</name>
<sequence length="414" mass="47365">MEFEIHLPKEPLLVAVSGGCDSMVLAHLLYEANHDLMIVHVHHGLRKESDEEAEAVRAWAEARRVGIRMTRLEWEGQAPSQAACRTRRYAFFQEVMAETGRRHLVLAHHRDDQLETLLIQLIRGEAGVDGIPRIRSFATGQIHRPLLPYSKQQLYDYAKARQVVWHEDETNAGTKYLRNQMRHRLLPLLAELRPGYEEATVQAAMVRYEQKQEHLKYVTSYVKEQMTDRGLPLEAIQKLPTDFRRLVLRALLPDHDFTSEDYNRFLTLLRVDMPSGEVYYGNWRIQRTYGYVTCVRCPEKNLLPEALEVGIDLGTYHYGEQTITFSRTTTGIPFSAVQFPLTIRSVLPGDRIRLAVGTKKVSRILVDAKVPRASRAEIPVVVDAAGQVLAVIGHRIAIFGSFELLAESCLMIEW</sequence>
<feature type="chain" id="PRO_1000213712" description="tRNA(Ile)-lysidine synthase">
    <location>
        <begin position="1"/>
        <end position="414"/>
    </location>
</feature>
<feature type="binding site" evidence="1">
    <location>
        <begin position="17"/>
        <end position="22"/>
    </location>
    <ligand>
        <name>ATP</name>
        <dbReference type="ChEBI" id="CHEBI:30616"/>
    </ligand>
</feature>
<gene>
    <name evidence="1" type="primary">tilS</name>
    <name type="ordered locus">Exig_0050</name>
</gene>